<evidence type="ECO:0000269" key="1">
    <source>
    </source>
</evidence>
<evidence type="ECO:0000269" key="2">
    <source>
    </source>
</evidence>
<evidence type="ECO:0000269" key="3">
    <source>
    </source>
</evidence>
<evidence type="ECO:0000269" key="4">
    <source>
    </source>
</evidence>
<evidence type="ECO:0000269" key="5">
    <source>
    </source>
</evidence>
<evidence type="ECO:0000305" key="6"/>
<evidence type="ECO:0007829" key="7">
    <source>
        <dbReference type="PDB" id="1IWL"/>
    </source>
</evidence>
<evidence type="ECO:0007829" key="8">
    <source>
        <dbReference type="PDB" id="2ZPC"/>
    </source>
</evidence>
<evidence type="ECO:0007829" key="9">
    <source>
        <dbReference type="PDB" id="3KSN"/>
    </source>
</evidence>
<sequence>MKKIAITCALLSSLVASSVWADAASDLKSRLDKVSSFHASFTQKVTDGSGAAVQEGQGDLWVKRPNLFNWHMTQPDESILVSDGKTLWFYNPFVEQATATWLKDATGNTPFMLIARNQSSDWQQYNIKQNGDDFVLTPKASNGNLKQFTINVGRDGTIHQFSAVEQDDQRSSYQLKSQQNGAVDAAKFTFTPPQGVTVDDQRK</sequence>
<feature type="signal peptide" evidence="4 5">
    <location>
        <begin position="1"/>
        <end position="21"/>
    </location>
</feature>
<feature type="chain" id="PRO_0000018256" description="Outer-membrane lipoprotein carrier protein">
    <location>
        <begin position="22"/>
        <end position="203"/>
    </location>
</feature>
<feature type="mutagenesis site" description="Loss of ability to transfer lipoproteins to LolB." evidence="1">
    <original>R</original>
    <variation>L</variation>
    <location>
        <position position="64"/>
    </location>
</feature>
<feature type="mutagenesis site" description="Loss of ability to bind lipoproteins." evidence="3">
    <original>F</original>
    <variation>E</variation>
    <location>
        <position position="68"/>
    </location>
</feature>
<feature type="helix" evidence="7">
    <location>
        <begin position="23"/>
        <end position="30"/>
    </location>
</feature>
<feature type="strand" evidence="7">
    <location>
        <begin position="35"/>
        <end position="46"/>
    </location>
</feature>
<feature type="strand" evidence="8">
    <location>
        <begin position="48"/>
        <end position="51"/>
    </location>
</feature>
<feature type="strand" evidence="7">
    <location>
        <begin position="54"/>
        <end position="63"/>
    </location>
</feature>
<feature type="turn" evidence="7">
    <location>
        <begin position="64"/>
        <end position="66"/>
    </location>
</feature>
<feature type="strand" evidence="7">
    <location>
        <begin position="67"/>
        <end position="72"/>
    </location>
</feature>
<feature type="strand" evidence="7">
    <location>
        <begin position="74"/>
        <end position="76"/>
    </location>
</feature>
<feature type="strand" evidence="7">
    <location>
        <begin position="78"/>
        <end position="91"/>
    </location>
</feature>
<feature type="helix" evidence="7">
    <location>
        <begin position="92"/>
        <end position="94"/>
    </location>
</feature>
<feature type="strand" evidence="7">
    <location>
        <begin position="96"/>
        <end position="101"/>
    </location>
</feature>
<feature type="helix" evidence="7">
    <location>
        <begin position="102"/>
        <end position="104"/>
    </location>
</feature>
<feature type="turn" evidence="9">
    <location>
        <begin position="105"/>
        <end position="107"/>
    </location>
</feature>
<feature type="helix" evidence="7">
    <location>
        <begin position="110"/>
        <end position="116"/>
    </location>
</feature>
<feature type="helix" evidence="7">
    <location>
        <begin position="119"/>
        <end position="122"/>
    </location>
</feature>
<feature type="strand" evidence="7">
    <location>
        <begin position="125"/>
        <end position="130"/>
    </location>
</feature>
<feature type="strand" evidence="7">
    <location>
        <begin position="133"/>
        <end position="142"/>
    </location>
</feature>
<feature type="strand" evidence="7">
    <location>
        <begin position="144"/>
        <end position="152"/>
    </location>
</feature>
<feature type="strand" evidence="7">
    <location>
        <begin position="158"/>
        <end position="165"/>
    </location>
</feature>
<feature type="strand" evidence="7">
    <location>
        <begin position="170"/>
        <end position="181"/>
    </location>
</feature>
<feature type="helix" evidence="7">
    <location>
        <begin position="185"/>
        <end position="188"/>
    </location>
</feature>
<feature type="strand" evidence="7">
    <location>
        <begin position="197"/>
        <end position="200"/>
    </location>
</feature>
<accession>P61316</accession>
<accession>P39178</accession>
<accession>Q8X5H8</accession>
<keyword id="KW-0002">3D-structure</keyword>
<keyword id="KW-0143">Chaperone</keyword>
<keyword id="KW-0903">Direct protein sequencing</keyword>
<keyword id="KW-0574">Periplasm</keyword>
<keyword id="KW-0653">Protein transport</keyword>
<keyword id="KW-1185">Reference proteome</keyword>
<keyword id="KW-0732">Signal</keyword>
<keyword id="KW-0813">Transport</keyword>
<reference key="1">
    <citation type="journal article" date="1995" name="EMBO J.">
        <title>A novel periplasmic carrier protein involved in the sorting and transport of Escherichia coli lipoproteins destined for the outer membrane.</title>
        <authorList>
            <person name="Matsuyama S."/>
            <person name="Tajima T."/>
            <person name="Tokuda H."/>
        </authorList>
    </citation>
    <scope>NUCLEOTIDE SEQUENCE [GENOMIC DNA]</scope>
    <scope>PROTEIN SEQUENCE OF 22-39; 45-60; 64-81; 104-115 AND 188-203</scope>
    <source>
        <strain>K12 / MC4100 / ATCC 35695 / DSM 6574</strain>
    </source>
</reference>
<reference key="2">
    <citation type="journal article" date="1996" name="DNA Res.">
        <title>A 718-kb DNA sequence of the Escherichia coli K-12 genome corresponding to the 12.7-28.0 min region on the linkage map.</title>
        <authorList>
            <person name="Oshima T."/>
            <person name="Aiba H."/>
            <person name="Baba T."/>
            <person name="Fujita K."/>
            <person name="Hayashi K."/>
            <person name="Honjo A."/>
            <person name="Ikemoto K."/>
            <person name="Inada T."/>
            <person name="Itoh T."/>
            <person name="Kajihara M."/>
            <person name="Kanai K."/>
            <person name="Kashimoto K."/>
            <person name="Kimura S."/>
            <person name="Kitagawa M."/>
            <person name="Makino K."/>
            <person name="Masuda S."/>
            <person name="Miki T."/>
            <person name="Mizobuchi K."/>
            <person name="Mori H."/>
            <person name="Motomura K."/>
            <person name="Nakamura Y."/>
            <person name="Nashimoto H."/>
            <person name="Nishio Y."/>
            <person name="Saito N."/>
            <person name="Sampei G."/>
            <person name="Seki Y."/>
            <person name="Tagami H."/>
            <person name="Takemoto K."/>
            <person name="Wada C."/>
            <person name="Yamamoto Y."/>
            <person name="Yano M."/>
            <person name="Horiuchi T."/>
        </authorList>
    </citation>
    <scope>NUCLEOTIDE SEQUENCE [LARGE SCALE GENOMIC DNA]</scope>
    <source>
        <strain>K12 / W3110 / ATCC 27325 / DSM 5911</strain>
    </source>
</reference>
<reference key="3">
    <citation type="journal article" date="1997" name="Science">
        <title>The complete genome sequence of Escherichia coli K-12.</title>
        <authorList>
            <person name="Blattner F.R."/>
            <person name="Plunkett G. III"/>
            <person name="Bloch C.A."/>
            <person name="Perna N.T."/>
            <person name="Burland V."/>
            <person name="Riley M."/>
            <person name="Collado-Vides J."/>
            <person name="Glasner J.D."/>
            <person name="Rode C.K."/>
            <person name="Mayhew G.F."/>
            <person name="Gregor J."/>
            <person name="Davis N.W."/>
            <person name="Kirkpatrick H.A."/>
            <person name="Goeden M.A."/>
            <person name="Rose D.J."/>
            <person name="Mau B."/>
            <person name="Shao Y."/>
        </authorList>
    </citation>
    <scope>NUCLEOTIDE SEQUENCE [LARGE SCALE GENOMIC DNA]</scope>
    <source>
        <strain>K12 / MG1655 / ATCC 47076</strain>
    </source>
</reference>
<reference key="4">
    <citation type="journal article" date="2006" name="Mol. Syst. Biol.">
        <title>Highly accurate genome sequences of Escherichia coli K-12 strains MG1655 and W3110.</title>
        <authorList>
            <person name="Hayashi K."/>
            <person name="Morooka N."/>
            <person name="Yamamoto Y."/>
            <person name="Fujita K."/>
            <person name="Isono K."/>
            <person name="Choi S."/>
            <person name="Ohtsubo E."/>
            <person name="Baba T."/>
            <person name="Wanner B.L."/>
            <person name="Mori H."/>
            <person name="Horiuchi T."/>
        </authorList>
    </citation>
    <scope>NUCLEOTIDE SEQUENCE [LARGE SCALE GENOMIC DNA]</scope>
    <source>
        <strain>K12 / W3110 / ATCC 27325 / DSM 5911</strain>
    </source>
</reference>
<reference key="5">
    <citation type="journal article" date="1997" name="Electrophoresis">
        <title>Comparing the predicted and observed properties of proteins encoded in the genome of Escherichia coli K-12.</title>
        <authorList>
            <person name="Link A.J."/>
            <person name="Robison K."/>
            <person name="Church G.M."/>
        </authorList>
    </citation>
    <scope>PROTEIN SEQUENCE OF 22-33</scope>
    <source>
        <strain>K12 / EMG2</strain>
    </source>
</reference>
<reference key="6">
    <citation type="journal article" date="2001" name="Biosci. Biotechnol. Biochem.">
        <title>Characterization of the RcsC-&gt;YojN-&gt;RcsB phosphorelay signaling pathway involved in capsular synthesis in Escherichia coli.</title>
        <authorList>
            <person name="Chen M.H."/>
            <person name="Takeda S."/>
            <person name="Yamada H."/>
            <person name="Ishii Y."/>
            <person name="Yamashino T."/>
            <person name="Mizuno T."/>
        </authorList>
    </citation>
    <scope>FUNCTION IN THE REGULATION OF THE RCS SYSTEM</scope>
</reference>
<reference key="7">
    <citation type="journal article" date="2001" name="J. Biol. Chem.">
        <title>Lipoprotein sorting signals evaluated as the LolA-dependent release of lipoproteins from the cytoplasmic membrane of Escherichia coli.</title>
        <authorList>
            <person name="Terada M."/>
            <person name="Kuroda T."/>
            <person name="Matsuyama S."/>
            <person name="Tokuda H."/>
        </authorList>
    </citation>
    <scope>CHARACTERIZATION OF SORTING SIGNALS</scope>
    <source>
        <strain>K12 / MC4100 / ATCC 35695 / DSM 6574</strain>
    </source>
</reference>
<reference key="8">
    <citation type="journal article" date="2002" name="Proc. Natl. Acad. Sci. U.S.A.">
        <title>Elucidation of the function of lipoprotein-sorting signals that determine membrane localization.</title>
        <authorList>
            <person name="Masuda K."/>
            <person name="Matsuyama S."/>
            <person name="Tokuda H."/>
        </authorList>
    </citation>
    <scope>CHARACTERIZATION OF SORTING SIGNALS</scope>
    <source>
        <strain>K12 / MC4100 / ATCC 35695 / DSM 6574</strain>
    </source>
</reference>
<reference key="9">
    <citation type="journal article" date="2002" name="J. Biol. Chem.">
        <title>Aminoacylation of the N-terminal cysteine is essential for Lol-dependent release of lipoproteins from membranes but does not depend on lipoprotein sorting signals.</title>
        <authorList>
            <person name="Fukuda A."/>
            <person name="Matsuyama S."/>
            <person name="Hara T."/>
            <person name="Nakayama J."/>
            <person name="Nagasawa H."/>
            <person name="Tokuda H."/>
        </authorList>
    </citation>
    <scope>REQUIREMENT OF AMINOACYLATION FOR RELEASE OF LIPOPROTEINS</scope>
    <source>
        <strain>K12 / MC4100 / ATCC 35695 / DSM 6574</strain>
    </source>
</reference>
<reference key="10">
    <citation type="journal article" date="2001" name="Biochem. Biophys. Res. Commun.">
        <title>Mutant of LolA, a lipoprotein-specific molecular chaperone of Escherichia coli, defective in the transfer of lipoproteins to LolB.</title>
        <authorList>
            <person name="Miyamoto A."/>
            <person name="Matsuyama S."/>
            <person name="Tokuda H."/>
        </authorList>
    </citation>
    <scope>MUTAGENESIS OF ARG-64</scope>
    <source>
        <strain>K12 / MC4100 / ATCC 35695 / DSM 6574</strain>
    </source>
</reference>
<reference key="11">
    <citation type="journal article" date="2002" name="FEBS Lett.">
        <title>Dominant negative mutant of a lipoprotein-specific molecular chaperone, LolA, tightly associates with LolCDE.</title>
        <authorList>
            <person name="Miyamoto A."/>
            <person name="Matsuyama S."/>
            <person name="Tokuda H."/>
        </authorList>
    </citation>
    <scope>MUTAGENESIS OF PHE-68</scope>
    <source>
        <strain>K12 / MC4100 / ATCC 35695 / DSM 6574</strain>
    </source>
</reference>
<reference key="12">
    <citation type="journal article" date="2003" name="Acta Crystallogr. D">
        <title>A practical phasing procedure using the MAD method without the aid of XAFS measurements: successful solution in the structure determination of the outer-membrane lipoprotein carrier LolA.</title>
        <authorList>
            <person name="Takeda K."/>
            <person name="Miyatake H."/>
            <person name="Yokota N."/>
            <person name="Matsuyama S."/>
            <person name="Tokuda H."/>
            <person name="Miki K."/>
        </authorList>
    </citation>
    <scope>CRYSTALLIZATION</scope>
</reference>
<reference key="13">
    <citation type="journal article" date="2003" name="EMBO J.">
        <title>Crystal structures of bacterial lipoprotein localization factors, LolA and LolB.</title>
        <authorList>
            <person name="Takeda K."/>
            <person name="Miyatake H."/>
            <person name="Yokota N."/>
            <person name="Matsuyama S."/>
            <person name="Tokuda H."/>
            <person name="Miki K."/>
        </authorList>
    </citation>
    <scope>X-RAY CRYSTALLOGRAPHY (1.65 ANGSTROMS)</scope>
</reference>
<dbReference type="EMBL" id="D49398">
    <property type="protein sequence ID" value="BAA08390.1"/>
    <property type="status" value="ALT_INIT"/>
    <property type="molecule type" value="Genomic_DNA"/>
</dbReference>
<dbReference type="EMBL" id="U00096">
    <property type="protein sequence ID" value="AAC73977.2"/>
    <property type="molecule type" value="Genomic_DNA"/>
</dbReference>
<dbReference type="EMBL" id="AP009048">
    <property type="protein sequence ID" value="BAA35616.1"/>
    <property type="status" value="ALT_INIT"/>
    <property type="molecule type" value="Genomic_DNA"/>
</dbReference>
<dbReference type="PIR" id="S57828">
    <property type="entry name" value="S57828"/>
</dbReference>
<dbReference type="RefSeq" id="NP_415411.2">
    <property type="nucleotide sequence ID" value="NC_000913.3"/>
</dbReference>
<dbReference type="RefSeq" id="WP_001295343.1">
    <property type="nucleotide sequence ID" value="NZ_STEB01000006.1"/>
</dbReference>
<dbReference type="PDB" id="1IWL">
    <property type="method" value="X-ray"/>
    <property type="resolution" value="1.65 A"/>
    <property type="chains" value="A=22-203"/>
</dbReference>
<dbReference type="PDB" id="1UA8">
    <property type="method" value="X-ray"/>
    <property type="resolution" value="1.90 A"/>
    <property type="chains" value="A=22-203"/>
</dbReference>
<dbReference type="PDB" id="2ZPC">
    <property type="method" value="X-ray"/>
    <property type="resolution" value="2.35 A"/>
    <property type="chains" value="A=22-203"/>
</dbReference>
<dbReference type="PDB" id="2ZPD">
    <property type="method" value="X-ray"/>
    <property type="resolution" value="1.85 A"/>
    <property type="chains" value="A=22-203"/>
</dbReference>
<dbReference type="PDB" id="3KSN">
    <property type="method" value="X-ray"/>
    <property type="resolution" value="1.65 A"/>
    <property type="chains" value="A=22-203"/>
</dbReference>
<dbReference type="PDB" id="6F3Z">
    <property type="method" value="X-ray"/>
    <property type="resolution" value="2.00 A"/>
    <property type="chains" value="B/D=22-203"/>
</dbReference>
<dbReference type="PDB" id="6FHM">
    <property type="method" value="X-ray"/>
    <property type="resolution" value="2.39 A"/>
    <property type="chains" value="A/B=22-203"/>
</dbReference>
<dbReference type="PDB" id="7ARM">
    <property type="method" value="EM"/>
    <property type="resolution" value="3.60 A"/>
    <property type="chains" value="A=20-203"/>
</dbReference>
<dbReference type="PDB" id="7Z6W">
    <property type="method" value="X-ray"/>
    <property type="resolution" value="1.84 A"/>
    <property type="chains" value="A=22-203"/>
</dbReference>
<dbReference type="PDB" id="7Z6X">
    <property type="method" value="X-ray"/>
    <property type="resolution" value="2.06 A"/>
    <property type="chains" value="A=22-203"/>
</dbReference>
<dbReference type="PDBsum" id="1IWL"/>
<dbReference type="PDBsum" id="1UA8"/>
<dbReference type="PDBsum" id="2ZPC"/>
<dbReference type="PDBsum" id="2ZPD"/>
<dbReference type="PDBsum" id="3KSN"/>
<dbReference type="PDBsum" id="6F3Z"/>
<dbReference type="PDBsum" id="6FHM"/>
<dbReference type="PDBsum" id="7ARM"/>
<dbReference type="PDBsum" id="7Z6W"/>
<dbReference type="PDBsum" id="7Z6X"/>
<dbReference type="EMDB" id="EMD-11887"/>
<dbReference type="SMR" id="P61316"/>
<dbReference type="BioGRID" id="4260649">
    <property type="interactions" value="339"/>
</dbReference>
<dbReference type="DIP" id="DIP-35675N"/>
<dbReference type="FunCoup" id="P61316">
    <property type="interactions" value="135"/>
</dbReference>
<dbReference type="IntAct" id="P61316">
    <property type="interactions" value="16"/>
</dbReference>
<dbReference type="MINT" id="P61316"/>
<dbReference type="STRING" id="511145.b0891"/>
<dbReference type="BindingDB" id="P61316"/>
<dbReference type="ChEMBL" id="CHEMBL3309024"/>
<dbReference type="TCDB" id="1.B.46.1.1">
    <property type="family name" value="the outer membrane lolab lipoprotein insertion apparatus (lolab) family"/>
</dbReference>
<dbReference type="jPOST" id="P61316"/>
<dbReference type="PaxDb" id="511145-b0891"/>
<dbReference type="EnsemblBacteria" id="AAC73977">
    <property type="protein sequence ID" value="AAC73977"/>
    <property type="gene ID" value="b0891"/>
</dbReference>
<dbReference type="GeneID" id="93776529"/>
<dbReference type="GeneID" id="948989"/>
<dbReference type="KEGG" id="ecj:JW0874"/>
<dbReference type="KEGG" id="eco:b0891"/>
<dbReference type="KEGG" id="ecoc:C3026_05515"/>
<dbReference type="PATRIC" id="fig|1411691.4.peg.1386"/>
<dbReference type="EchoBASE" id="EB2548"/>
<dbReference type="eggNOG" id="COG2834">
    <property type="taxonomic scope" value="Bacteria"/>
</dbReference>
<dbReference type="HOGENOM" id="CLU_087560_1_1_6"/>
<dbReference type="InParanoid" id="P61316"/>
<dbReference type="OMA" id="YDPFVEQ"/>
<dbReference type="OrthoDB" id="9787361at2"/>
<dbReference type="PhylomeDB" id="P61316"/>
<dbReference type="BioCyc" id="EcoCyc:G6465-MONOMER"/>
<dbReference type="BioCyc" id="MetaCyc:G6465-MONOMER"/>
<dbReference type="EvolutionaryTrace" id="P61316"/>
<dbReference type="PRO" id="PR:P61316"/>
<dbReference type="Proteomes" id="UP000000625">
    <property type="component" value="Chromosome"/>
</dbReference>
<dbReference type="GO" id="GO:0030288">
    <property type="term" value="C:outer membrane-bounded periplasmic space"/>
    <property type="evidence" value="ECO:0000314"/>
    <property type="project" value="EcoCyc"/>
</dbReference>
<dbReference type="GO" id="GO:0044874">
    <property type="term" value="P:lipoprotein localization to outer membrane"/>
    <property type="evidence" value="ECO:0000314"/>
    <property type="project" value="CACAO"/>
</dbReference>
<dbReference type="GO" id="GO:0042953">
    <property type="term" value="P:lipoprotein transport"/>
    <property type="evidence" value="ECO:0000314"/>
    <property type="project" value="EcoCyc"/>
</dbReference>
<dbReference type="CDD" id="cd16325">
    <property type="entry name" value="LolA"/>
    <property type="match status" value="1"/>
</dbReference>
<dbReference type="FunFam" id="2.50.20.10:FF:000001">
    <property type="entry name" value="Outer-membrane lipoprotein carrier protein"/>
    <property type="match status" value="1"/>
</dbReference>
<dbReference type="Gene3D" id="2.50.20.10">
    <property type="entry name" value="Lipoprotein localisation LolA/LolB/LppX"/>
    <property type="match status" value="1"/>
</dbReference>
<dbReference type="HAMAP" id="MF_00240">
    <property type="entry name" value="LolA"/>
    <property type="match status" value="1"/>
</dbReference>
<dbReference type="InterPro" id="IPR029046">
    <property type="entry name" value="LolA/LolB/LppX"/>
</dbReference>
<dbReference type="InterPro" id="IPR004564">
    <property type="entry name" value="OM_lipoprot_carrier_LolA-like"/>
</dbReference>
<dbReference type="InterPro" id="IPR018323">
    <property type="entry name" value="OM_lipoprot_carrier_LolA_Pbac"/>
</dbReference>
<dbReference type="NCBIfam" id="TIGR00547">
    <property type="entry name" value="lolA"/>
    <property type="match status" value="1"/>
</dbReference>
<dbReference type="PANTHER" id="PTHR35869">
    <property type="entry name" value="OUTER-MEMBRANE LIPOPROTEIN CARRIER PROTEIN"/>
    <property type="match status" value="1"/>
</dbReference>
<dbReference type="PANTHER" id="PTHR35869:SF1">
    <property type="entry name" value="OUTER-MEMBRANE LIPOPROTEIN CARRIER PROTEIN"/>
    <property type="match status" value="1"/>
</dbReference>
<dbReference type="Pfam" id="PF03548">
    <property type="entry name" value="LolA"/>
    <property type="match status" value="1"/>
</dbReference>
<dbReference type="SUPFAM" id="SSF89392">
    <property type="entry name" value="Prokaryotic lipoproteins and lipoprotein localization factors"/>
    <property type="match status" value="1"/>
</dbReference>
<proteinExistence type="evidence at protein level"/>
<organism>
    <name type="scientific">Escherichia coli (strain K12)</name>
    <dbReference type="NCBI Taxonomy" id="83333"/>
    <lineage>
        <taxon>Bacteria</taxon>
        <taxon>Pseudomonadati</taxon>
        <taxon>Pseudomonadota</taxon>
        <taxon>Gammaproteobacteria</taxon>
        <taxon>Enterobacterales</taxon>
        <taxon>Enterobacteriaceae</taxon>
        <taxon>Escherichia</taxon>
    </lineage>
</organism>
<gene>
    <name type="primary">lolA</name>
    <name type="synonym">lplA</name>
    <name type="synonym">yzzV</name>
    <name type="ordered locus">b0891</name>
    <name type="ordered locus">JW0874</name>
</gene>
<protein>
    <recommendedName>
        <fullName>Outer-membrane lipoprotein carrier protein</fullName>
    </recommendedName>
    <alternativeName>
        <fullName>P20</fullName>
    </alternativeName>
</protein>
<comment type="function">
    <text evidence="2">Participates in the translocation of lipoproteins from the inner membrane to the outer membrane. Only forms a complex with a lipoprotein if the residue after the N-terminal Cys is not an aspartate (The Asp acts as a targeting signal to indicate that the lipoprotein should stay in the inner membrane); the inner membrane retention signal functions at the release step.</text>
</comment>
<comment type="function">
    <text evidence="2">May act as a regulator of the RCS-phosphorelay signal transduction pathway.</text>
</comment>
<comment type="subunit">
    <text>Monomer.</text>
</comment>
<comment type="interaction">
    <interactant intactId="EBI-553532">
        <id>P61316</id>
    </interactant>
    <interactant intactId="EBI-1122794">
        <id>P61320</id>
        <label>lolB</label>
    </interactant>
    <organismsDiffer>false</organismsDiffer>
    <experiments>2</experiments>
</comment>
<comment type="interaction">
    <interactant intactId="EBI-553532">
        <id>P61316</id>
    </interactant>
    <interactant intactId="EBI-15765497">
        <id>P0ADC3</id>
        <label>lolC</label>
    </interactant>
    <organismsDiffer>false</organismsDiffer>
    <experiments>4</experiments>
</comment>
<comment type="interaction">
    <interactant intactId="EBI-553532">
        <id>P61316</id>
    </interactant>
    <interactant intactId="EBI-1124760">
        <id>P0A912</id>
        <label>pal</label>
    </interactant>
    <organismsDiffer>false</organismsDiffer>
    <experiments>2</experiments>
</comment>
<comment type="subcellular location">
    <subcellularLocation>
        <location>Periplasm</location>
    </subcellularLocation>
</comment>
<comment type="similarity">
    <text evidence="6">Belongs to the LolA family.</text>
</comment>
<comment type="sequence caution" evidence="6">
    <conflict type="erroneous initiation">
        <sequence resource="EMBL-CDS" id="BAA08390"/>
    </conflict>
    <text>Extended N-terminus.</text>
</comment>
<comment type="sequence caution" evidence="6">
    <conflict type="erroneous initiation">
        <sequence resource="EMBL-CDS" id="BAA35616"/>
    </conflict>
    <text>Extended N-terminus.</text>
</comment>
<name>LOLA_ECOLI</name>